<organism>
    <name type="scientific">Streptococcus pyogenes serotype M3 (strain ATCC BAA-595 / MGAS315)</name>
    <dbReference type="NCBI Taxonomy" id="198466"/>
    <lineage>
        <taxon>Bacteria</taxon>
        <taxon>Bacillati</taxon>
        <taxon>Bacillota</taxon>
        <taxon>Bacilli</taxon>
        <taxon>Lactobacillales</taxon>
        <taxon>Streptococcaceae</taxon>
        <taxon>Streptococcus</taxon>
    </lineage>
</organism>
<keyword id="KW-0324">Glycolysis</keyword>
<keyword id="KW-0456">Lyase</keyword>
<keyword id="KW-0479">Metal-binding</keyword>
<keyword id="KW-0862">Zinc</keyword>
<comment type="function">
    <text evidence="1">Catalyzes the aldol condensation of dihydroxyacetone phosphate (DHAP or glycerone-phosphate) with glyceraldehyde 3-phosphate (G3P) to form fructose 1,6-bisphosphate (FBP) in gluconeogenesis and the reverse reaction in glycolysis.</text>
</comment>
<comment type="catalytic activity">
    <reaction>
        <text>beta-D-fructose 1,6-bisphosphate = D-glyceraldehyde 3-phosphate + dihydroxyacetone phosphate</text>
        <dbReference type="Rhea" id="RHEA:14729"/>
        <dbReference type="ChEBI" id="CHEBI:32966"/>
        <dbReference type="ChEBI" id="CHEBI:57642"/>
        <dbReference type="ChEBI" id="CHEBI:59776"/>
        <dbReference type="EC" id="4.1.2.13"/>
    </reaction>
</comment>
<comment type="cofactor">
    <cofactor evidence="1">
        <name>Zn(2+)</name>
        <dbReference type="ChEBI" id="CHEBI:29105"/>
    </cofactor>
    <text evidence="1">Binds 2 Zn(2+) ions per subunit. One is catalytic and the other provides a structural contribution.</text>
</comment>
<comment type="pathway">
    <text>Carbohydrate degradation; glycolysis; D-glyceraldehyde 3-phosphate and glycerone phosphate from D-glucose: step 4/4.</text>
</comment>
<comment type="similarity">
    <text evidence="2">Belongs to the class II fructose-bisphosphate aldolase family.</text>
</comment>
<feature type="initiator methionine" description="Removed" evidence="1">
    <location>
        <position position="1"/>
    </location>
</feature>
<feature type="chain" id="PRO_0000178748" description="Fructose-bisphosphate aldolase">
    <location>
        <begin position="2"/>
        <end position="293"/>
    </location>
</feature>
<feature type="active site" description="Proton donor" evidence="1">
    <location>
        <position position="85"/>
    </location>
</feature>
<feature type="binding site" evidence="1">
    <location>
        <position position="50"/>
    </location>
    <ligand>
        <name>D-glyceraldehyde 3-phosphate</name>
        <dbReference type="ChEBI" id="CHEBI:59776"/>
    </ligand>
</feature>
<feature type="binding site" evidence="1">
    <location>
        <position position="86"/>
    </location>
    <ligand>
        <name>Zn(2+)</name>
        <dbReference type="ChEBI" id="CHEBI:29105"/>
        <label>1</label>
        <note>catalytic</note>
    </ligand>
</feature>
<feature type="binding site" evidence="1">
    <location>
        <position position="106"/>
    </location>
    <ligand>
        <name>Zn(2+)</name>
        <dbReference type="ChEBI" id="CHEBI:29105"/>
        <label>2</label>
    </ligand>
</feature>
<feature type="binding site" evidence="1">
    <location>
        <position position="136"/>
    </location>
    <ligand>
        <name>Zn(2+)</name>
        <dbReference type="ChEBI" id="CHEBI:29105"/>
        <label>2</label>
    </ligand>
</feature>
<feature type="binding site" evidence="1">
    <location>
        <position position="178"/>
    </location>
    <ligand>
        <name>Zn(2+)</name>
        <dbReference type="ChEBI" id="CHEBI:29105"/>
        <label>1</label>
        <note>catalytic</note>
    </ligand>
</feature>
<feature type="binding site" evidence="1">
    <location>
        <position position="179"/>
    </location>
    <ligand>
        <name>dihydroxyacetone phosphate</name>
        <dbReference type="ChEBI" id="CHEBI:57642"/>
    </ligand>
</feature>
<feature type="binding site" evidence="1">
    <location>
        <position position="208"/>
    </location>
    <ligand>
        <name>Zn(2+)</name>
        <dbReference type="ChEBI" id="CHEBI:29105"/>
        <label>1</label>
        <note>catalytic</note>
    </ligand>
</feature>
<feature type="binding site" evidence="1">
    <location>
        <begin position="209"/>
        <end position="211"/>
    </location>
    <ligand>
        <name>dihydroxyacetone phosphate</name>
        <dbReference type="ChEBI" id="CHEBI:57642"/>
    </ligand>
</feature>
<feature type="binding site" evidence="1">
    <location>
        <begin position="230"/>
        <end position="233"/>
    </location>
    <ligand>
        <name>dihydroxyacetone phosphate</name>
        <dbReference type="ChEBI" id="CHEBI:57642"/>
    </ligand>
</feature>
<gene>
    <name type="primary">fba</name>
    <name type="ordered locus">SpyM3_1630</name>
</gene>
<evidence type="ECO:0000250" key="1"/>
<evidence type="ECO:0000305" key="2"/>
<protein>
    <recommendedName>
        <fullName>Fructose-bisphosphate aldolase</fullName>
        <shortName>FBP aldolase</shortName>
        <shortName>FBPA</shortName>
        <ecNumber>4.1.2.13</ecNumber>
    </recommendedName>
    <alternativeName>
        <fullName>Fructose-1,6-bisphosphate aldolase</fullName>
    </alternativeName>
</protein>
<reference key="1">
    <citation type="journal article" date="2002" name="Proc. Natl. Acad. Sci. U.S.A.">
        <title>Genome sequence of a serotype M3 strain of group A Streptococcus: phage-encoded toxins, the high-virulence phenotype, and clone emergence.</title>
        <authorList>
            <person name="Beres S.B."/>
            <person name="Sylva G.L."/>
            <person name="Barbian K.D."/>
            <person name="Lei B."/>
            <person name="Hoff J.S."/>
            <person name="Mammarella N.D."/>
            <person name="Liu M.-Y."/>
            <person name="Smoot J.C."/>
            <person name="Porcella S.F."/>
            <person name="Parkins L.D."/>
            <person name="Campbell D.S."/>
            <person name="Smith T.M."/>
            <person name="McCormick J.K."/>
            <person name="Leung D.Y.M."/>
            <person name="Schlievert P.M."/>
            <person name="Musser J.M."/>
        </authorList>
    </citation>
    <scope>NUCLEOTIDE SEQUENCE [LARGE SCALE GENOMIC DNA]</scope>
    <source>
        <strain>ATCC BAA-595 / MGAS315</strain>
    </source>
</reference>
<accession>P0CZ58</accession>
<accession>Q8K5W5</accession>
<name>ALF_STRP3</name>
<sequence>MAIVSAEKFVQAARKNGYAVGGFNTNNLEWTQAILRAAEAKQAPVLIQTSMGAAKYMGGYKVCQSLITNLVESMGITVPVAIHLDHGHYEDALECIEVGYTSIMFDGSHLPVEENLAKTAEVVKIAHAKGVSVEAEVGTIGGEEDGIIGKGELAPIEDAKAMVETGIDFLAAGIGNIHGPYPENWEGLALDHLEKLTAAVPGFPIVLHGGSGIPDDQIKEAIRLGVAKVNVNTESQIAFSNATREFARNYEANEAEYDGKKLFDPRKFLAPGMKAVQGAVEERIDVFGSANKA</sequence>
<dbReference type="EC" id="4.1.2.13"/>
<dbReference type="EMBL" id="AE014074">
    <property type="protein sequence ID" value="AAM80237.1"/>
    <property type="molecule type" value="Genomic_DNA"/>
</dbReference>
<dbReference type="RefSeq" id="WP_011054987.1">
    <property type="nucleotide sequence ID" value="NC_004070.1"/>
</dbReference>
<dbReference type="SMR" id="P0CZ58"/>
<dbReference type="KEGG" id="spg:SpyM3_1630"/>
<dbReference type="HOGENOM" id="CLU_040088_0_1_9"/>
<dbReference type="UniPathway" id="UPA00109">
    <property type="reaction ID" value="UER00183"/>
</dbReference>
<dbReference type="Proteomes" id="UP000000564">
    <property type="component" value="Chromosome"/>
</dbReference>
<dbReference type="GO" id="GO:0004332">
    <property type="term" value="F:fructose-bisphosphate aldolase activity"/>
    <property type="evidence" value="ECO:0007669"/>
    <property type="project" value="UniProtKB-EC"/>
</dbReference>
<dbReference type="GO" id="GO:0008270">
    <property type="term" value="F:zinc ion binding"/>
    <property type="evidence" value="ECO:0007669"/>
    <property type="project" value="InterPro"/>
</dbReference>
<dbReference type="GO" id="GO:0030388">
    <property type="term" value="P:fructose 1,6-bisphosphate metabolic process"/>
    <property type="evidence" value="ECO:0007669"/>
    <property type="project" value="InterPro"/>
</dbReference>
<dbReference type="GO" id="GO:0006096">
    <property type="term" value="P:glycolytic process"/>
    <property type="evidence" value="ECO:0007669"/>
    <property type="project" value="UniProtKB-UniPathway"/>
</dbReference>
<dbReference type="CDD" id="cd00947">
    <property type="entry name" value="TBP_aldolase_IIB"/>
    <property type="match status" value="1"/>
</dbReference>
<dbReference type="FunFam" id="3.20.20.70:FF:000111">
    <property type="entry name" value="Fructose-1,6-bisphosphate aldolase"/>
    <property type="match status" value="1"/>
</dbReference>
<dbReference type="Gene3D" id="3.20.20.70">
    <property type="entry name" value="Aldolase class I"/>
    <property type="match status" value="1"/>
</dbReference>
<dbReference type="InterPro" id="IPR013785">
    <property type="entry name" value="Aldolase_TIM"/>
</dbReference>
<dbReference type="InterPro" id="IPR050246">
    <property type="entry name" value="Class_II_FBP_aldolase"/>
</dbReference>
<dbReference type="InterPro" id="IPR000771">
    <property type="entry name" value="FBA_II"/>
</dbReference>
<dbReference type="InterPro" id="IPR011289">
    <property type="entry name" value="Fruc_bis_ald_class-2"/>
</dbReference>
<dbReference type="NCBIfam" id="TIGR00167">
    <property type="entry name" value="cbbA"/>
    <property type="match status" value="1"/>
</dbReference>
<dbReference type="NCBIfam" id="TIGR01859">
    <property type="entry name" value="fruc_bis_ald"/>
    <property type="match status" value="1"/>
</dbReference>
<dbReference type="NCBIfam" id="NF005590">
    <property type="entry name" value="PRK07315.1"/>
    <property type="match status" value="1"/>
</dbReference>
<dbReference type="PANTHER" id="PTHR30304">
    <property type="entry name" value="D-TAGATOSE-1,6-BISPHOSPHATE ALDOLASE"/>
    <property type="match status" value="1"/>
</dbReference>
<dbReference type="PANTHER" id="PTHR30304:SF0">
    <property type="entry name" value="D-TAGATOSE-1,6-BISPHOSPHATE ALDOLASE SUBUNIT GATY-RELATED"/>
    <property type="match status" value="1"/>
</dbReference>
<dbReference type="Pfam" id="PF01116">
    <property type="entry name" value="F_bP_aldolase"/>
    <property type="match status" value="1"/>
</dbReference>
<dbReference type="PIRSF" id="PIRSF001359">
    <property type="entry name" value="F_bP_aldolase_II"/>
    <property type="match status" value="1"/>
</dbReference>
<dbReference type="SUPFAM" id="SSF51569">
    <property type="entry name" value="Aldolase"/>
    <property type="match status" value="1"/>
</dbReference>
<dbReference type="PROSITE" id="PS00602">
    <property type="entry name" value="ALDOLASE_CLASS_II_1"/>
    <property type="match status" value="1"/>
</dbReference>
<dbReference type="PROSITE" id="PS00806">
    <property type="entry name" value="ALDOLASE_CLASS_II_2"/>
    <property type="match status" value="1"/>
</dbReference>
<proteinExistence type="inferred from homology"/>